<dbReference type="EMBL" id="CP000716">
    <property type="protein sequence ID" value="ABR30833.1"/>
    <property type="molecule type" value="Genomic_DNA"/>
</dbReference>
<dbReference type="RefSeq" id="WP_012057194.1">
    <property type="nucleotide sequence ID" value="NC_009616.1"/>
</dbReference>
<dbReference type="SMR" id="A6LLN2"/>
<dbReference type="STRING" id="391009.Tmel_0972"/>
<dbReference type="KEGG" id="tme:Tmel_0972"/>
<dbReference type="eggNOG" id="COG0200">
    <property type="taxonomic scope" value="Bacteria"/>
</dbReference>
<dbReference type="HOGENOM" id="CLU_055188_4_2_0"/>
<dbReference type="OrthoDB" id="9810293at2"/>
<dbReference type="Proteomes" id="UP000001110">
    <property type="component" value="Chromosome"/>
</dbReference>
<dbReference type="GO" id="GO:0022625">
    <property type="term" value="C:cytosolic large ribosomal subunit"/>
    <property type="evidence" value="ECO:0007669"/>
    <property type="project" value="TreeGrafter"/>
</dbReference>
<dbReference type="GO" id="GO:0019843">
    <property type="term" value="F:rRNA binding"/>
    <property type="evidence" value="ECO:0007669"/>
    <property type="project" value="UniProtKB-UniRule"/>
</dbReference>
<dbReference type="GO" id="GO:0003735">
    <property type="term" value="F:structural constituent of ribosome"/>
    <property type="evidence" value="ECO:0007669"/>
    <property type="project" value="InterPro"/>
</dbReference>
<dbReference type="GO" id="GO:0006412">
    <property type="term" value="P:translation"/>
    <property type="evidence" value="ECO:0007669"/>
    <property type="project" value="UniProtKB-UniRule"/>
</dbReference>
<dbReference type="FunFam" id="3.100.10.10:FF:000005">
    <property type="entry name" value="50S ribosomal protein L15"/>
    <property type="match status" value="1"/>
</dbReference>
<dbReference type="Gene3D" id="3.100.10.10">
    <property type="match status" value="1"/>
</dbReference>
<dbReference type="HAMAP" id="MF_01341">
    <property type="entry name" value="Ribosomal_uL15"/>
    <property type="match status" value="1"/>
</dbReference>
<dbReference type="InterPro" id="IPR030878">
    <property type="entry name" value="Ribosomal_uL15"/>
</dbReference>
<dbReference type="InterPro" id="IPR021131">
    <property type="entry name" value="Ribosomal_uL15/eL18"/>
</dbReference>
<dbReference type="InterPro" id="IPR036227">
    <property type="entry name" value="Ribosomal_uL15/eL18_sf"/>
</dbReference>
<dbReference type="InterPro" id="IPR005749">
    <property type="entry name" value="Ribosomal_uL15_bac-type"/>
</dbReference>
<dbReference type="InterPro" id="IPR001196">
    <property type="entry name" value="Ribosomal_uL15_CS"/>
</dbReference>
<dbReference type="NCBIfam" id="TIGR01071">
    <property type="entry name" value="rplO_bact"/>
    <property type="match status" value="1"/>
</dbReference>
<dbReference type="PANTHER" id="PTHR12934">
    <property type="entry name" value="50S RIBOSOMAL PROTEIN L15"/>
    <property type="match status" value="1"/>
</dbReference>
<dbReference type="PANTHER" id="PTHR12934:SF11">
    <property type="entry name" value="LARGE RIBOSOMAL SUBUNIT PROTEIN UL15M"/>
    <property type="match status" value="1"/>
</dbReference>
<dbReference type="Pfam" id="PF00828">
    <property type="entry name" value="Ribosomal_L27A"/>
    <property type="match status" value="1"/>
</dbReference>
<dbReference type="SUPFAM" id="SSF52080">
    <property type="entry name" value="Ribosomal proteins L15p and L18e"/>
    <property type="match status" value="1"/>
</dbReference>
<dbReference type="PROSITE" id="PS00475">
    <property type="entry name" value="RIBOSOMAL_L15"/>
    <property type="match status" value="1"/>
</dbReference>
<name>RL15_THEM4</name>
<comment type="function">
    <text evidence="1">Binds to the 23S rRNA.</text>
</comment>
<comment type="subunit">
    <text evidence="1">Part of the 50S ribosomal subunit.</text>
</comment>
<comment type="similarity">
    <text evidence="1">Belongs to the universal ribosomal protein uL15 family.</text>
</comment>
<protein>
    <recommendedName>
        <fullName evidence="1">Large ribosomal subunit protein uL15</fullName>
    </recommendedName>
    <alternativeName>
        <fullName evidence="3">50S ribosomal protein L15</fullName>
    </alternativeName>
</protein>
<feature type="chain" id="PRO_1000054557" description="Large ribosomal subunit protein uL15">
    <location>
        <begin position="1"/>
        <end position="147"/>
    </location>
</feature>
<feature type="region of interest" description="Disordered" evidence="2">
    <location>
        <begin position="1"/>
        <end position="54"/>
    </location>
</feature>
<feature type="compositionally biased region" description="Basic residues" evidence="2">
    <location>
        <begin position="30"/>
        <end position="46"/>
    </location>
</feature>
<reference key="1">
    <citation type="submission" date="2007-05" db="EMBL/GenBank/DDBJ databases">
        <title>Complete sequence of Thermosipho melanesiensis BI429.</title>
        <authorList>
            <consortium name="US DOE Joint Genome Institute"/>
            <person name="Copeland A."/>
            <person name="Lucas S."/>
            <person name="Lapidus A."/>
            <person name="Barry K."/>
            <person name="Glavina del Rio T."/>
            <person name="Dalin E."/>
            <person name="Tice H."/>
            <person name="Pitluck S."/>
            <person name="Chertkov O."/>
            <person name="Brettin T."/>
            <person name="Bruce D."/>
            <person name="Detter J.C."/>
            <person name="Han C."/>
            <person name="Schmutz J."/>
            <person name="Larimer F."/>
            <person name="Land M."/>
            <person name="Hauser L."/>
            <person name="Kyrpides N."/>
            <person name="Mikhailova N."/>
            <person name="Nelson K."/>
            <person name="Gogarten J.P."/>
            <person name="Noll K."/>
            <person name="Richardson P."/>
        </authorList>
    </citation>
    <scope>NUCLEOTIDE SEQUENCE [LARGE SCALE GENOMIC DNA]</scope>
    <source>
        <strain>DSM 12029 / CIP 104789 / BI429</strain>
    </source>
</reference>
<gene>
    <name evidence="1" type="primary">rplO</name>
    <name type="ordered locus">Tmel_0972</name>
</gene>
<proteinExistence type="inferred from homology"/>
<evidence type="ECO:0000255" key="1">
    <source>
        <dbReference type="HAMAP-Rule" id="MF_01341"/>
    </source>
</evidence>
<evidence type="ECO:0000256" key="2">
    <source>
        <dbReference type="SAM" id="MobiDB-lite"/>
    </source>
</evidence>
<evidence type="ECO:0000305" key="3"/>
<accession>A6LLN2</accession>
<keyword id="KW-0687">Ribonucleoprotein</keyword>
<keyword id="KW-0689">Ribosomal protein</keyword>
<keyword id="KW-0694">RNA-binding</keyword>
<keyword id="KW-0699">rRNA-binding</keyword>
<organism>
    <name type="scientific">Thermosipho melanesiensis (strain DSM 12029 / CIP 104789 / BI429)</name>
    <dbReference type="NCBI Taxonomy" id="391009"/>
    <lineage>
        <taxon>Bacteria</taxon>
        <taxon>Thermotogati</taxon>
        <taxon>Thermotogota</taxon>
        <taxon>Thermotogae</taxon>
        <taxon>Thermotogales</taxon>
        <taxon>Fervidobacteriaceae</taxon>
        <taxon>Thermosipho</taxon>
    </lineage>
</organism>
<sequence>MRLSDIKPTPGSMKKRTRVGRGIGSGKGKTSGKGHKGQKARGRGKVHPWFEGGQTPLHRRLPKFGFKNFTKKVYSVVNVEQLEKIFESGEEVTPEKLLEKGVIKKINDGVKILGNGEITKPLTVIAHAFSSSARRKIEAVGGKVEVI</sequence>